<evidence type="ECO:0000255" key="1">
    <source>
        <dbReference type="HAMAP-Rule" id="MF_00432"/>
    </source>
</evidence>
<accession>Q20EX4</accession>
<keyword id="KW-0150">Chloroplast</keyword>
<keyword id="KW-0249">Electron transport</keyword>
<keyword id="KW-0472">Membrane</keyword>
<keyword id="KW-0602">Photosynthesis</keyword>
<keyword id="KW-0934">Plastid</keyword>
<keyword id="KW-0793">Thylakoid</keyword>
<keyword id="KW-0812">Transmembrane</keyword>
<keyword id="KW-1133">Transmembrane helix</keyword>
<keyword id="KW-0813">Transport</keyword>
<reference key="1">
    <citation type="journal article" date="2006" name="BMC Biol.">
        <title>The complete chloroplast DNA sequence of the green alga Oltmannsiellopsis viridis reveals a distinctive quadripartite architecture in the chloroplast genome of early diverging ulvophytes.</title>
        <authorList>
            <person name="Pombert J.-F."/>
            <person name="Lemieux C."/>
            <person name="Turmel M."/>
        </authorList>
    </citation>
    <scope>NUCLEOTIDE SEQUENCE [LARGE SCALE GENOMIC DNA]</scope>
</reference>
<gene>
    <name evidence="1" type="primary">petG</name>
</gene>
<proteinExistence type="inferred from homology"/>
<organism>
    <name type="scientific">Oltmannsiellopsis viridis</name>
    <name type="common">Marine flagellate</name>
    <name type="synonym">Oltmannsiella viridis</name>
    <dbReference type="NCBI Taxonomy" id="51324"/>
    <lineage>
        <taxon>Eukaryota</taxon>
        <taxon>Viridiplantae</taxon>
        <taxon>Chlorophyta</taxon>
        <taxon>Ulvophyceae</taxon>
        <taxon>Oltmannsiellopsidales</taxon>
        <taxon>Oltmannsiellopsidaceae</taxon>
        <taxon>Oltmannsiellopsis</taxon>
    </lineage>
</organism>
<sequence length="34" mass="3661">MVEPLLSGIVLGLVPVTLAGLFVTAYLQYRRGDV</sequence>
<name>PETG_OLTVI</name>
<feature type="chain" id="PRO_0000275499" description="Cytochrome b6-f complex subunit 5">
    <location>
        <begin position="1"/>
        <end position="34"/>
    </location>
</feature>
<feature type="transmembrane region" description="Helical" evidence="1">
    <location>
        <begin position="5"/>
        <end position="25"/>
    </location>
</feature>
<protein>
    <recommendedName>
        <fullName evidence="1">Cytochrome b6-f complex subunit 5</fullName>
    </recommendedName>
    <alternativeName>
        <fullName evidence="1">Cytochrome b6-f complex subunit PetG</fullName>
    </alternativeName>
    <alternativeName>
        <fullName evidence="1">Cytochrome b6-f complex subunit V</fullName>
    </alternativeName>
</protein>
<dbReference type="EMBL" id="DQ291132">
    <property type="protein sequence ID" value="ABB81939.1"/>
    <property type="molecule type" value="Genomic_DNA"/>
</dbReference>
<dbReference type="RefSeq" id="YP_635871.1">
    <property type="nucleotide sequence ID" value="NC_008099.1"/>
</dbReference>
<dbReference type="SMR" id="Q20EX4"/>
<dbReference type="GeneID" id="4100141"/>
<dbReference type="GO" id="GO:0009535">
    <property type="term" value="C:chloroplast thylakoid membrane"/>
    <property type="evidence" value="ECO:0007669"/>
    <property type="project" value="UniProtKB-SubCell"/>
</dbReference>
<dbReference type="GO" id="GO:0009512">
    <property type="term" value="C:cytochrome b6f complex"/>
    <property type="evidence" value="ECO:0007669"/>
    <property type="project" value="InterPro"/>
</dbReference>
<dbReference type="GO" id="GO:0045158">
    <property type="term" value="F:electron transporter, transferring electrons within cytochrome b6/f complex of photosystem II activity"/>
    <property type="evidence" value="ECO:0007669"/>
    <property type="project" value="UniProtKB-UniRule"/>
</dbReference>
<dbReference type="GO" id="GO:0017004">
    <property type="term" value="P:cytochrome complex assembly"/>
    <property type="evidence" value="ECO:0007669"/>
    <property type="project" value="UniProtKB-UniRule"/>
</dbReference>
<dbReference type="GO" id="GO:0015979">
    <property type="term" value="P:photosynthesis"/>
    <property type="evidence" value="ECO:0007669"/>
    <property type="project" value="UniProtKB-KW"/>
</dbReference>
<dbReference type="HAMAP" id="MF_00432">
    <property type="entry name" value="Cytb6_f_PetG"/>
    <property type="match status" value="1"/>
</dbReference>
<dbReference type="InterPro" id="IPR003683">
    <property type="entry name" value="Cyt_6/f_cplx_su5"/>
</dbReference>
<dbReference type="InterPro" id="IPR036099">
    <property type="entry name" value="Cyt_6/f_cplx_su5_sf"/>
</dbReference>
<dbReference type="NCBIfam" id="NF001907">
    <property type="entry name" value="PRK00665.1"/>
    <property type="match status" value="1"/>
</dbReference>
<dbReference type="Pfam" id="PF02529">
    <property type="entry name" value="PetG"/>
    <property type="match status" value="1"/>
</dbReference>
<dbReference type="PIRSF" id="PIRSF000034">
    <property type="entry name" value="Cyt_b6-f_V"/>
    <property type="match status" value="1"/>
</dbReference>
<dbReference type="SUPFAM" id="SSF103446">
    <property type="entry name" value="PetG subunit of the cytochrome b6f complex"/>
    <property type="match status" value="1"/>
</dbReference>
<geneLocation type="chloroplast"/>
<comment type="function">
    <text evidence="1">Component of the cytochrome b6-f complex, which mediates electron transfer between photosystem II (PSII) and photosystem I (PSI), cyclic electron flow around PSI, and state transitions. PetG is required for either the stability or assembly of the cytochrome b6-f complex.</text>
</comment>
<comment type="subunit">
    <text evidence="1">The 4 large subunits of the cytochrome b6-f complex are cytochrome b6, subunit IV (17 kDa polypeptide, PetD), cytochrome f and the Rieske protein, while the 4 small subunits are PetG, PetL, PetM and PetN. The complex functions as a dimer.</text>
</comment>
<comment type="subcellular location">
    <subcellularLocation>
        <location evidence="1">Plastid</location>
        <location evidence="1">Chloroplast thylakoid membrane</location>
        <topology evidence="1">Single-pass membrane protein</topology>
    </subcellularLocation>
</comment>
<comment type="similarity">
    <text evidence="1">Belongs to the PetG family.</text>
</comment>